<accession>Q210E7</accession>
<comment type="function">
    <text evidence="1">One of the essential components for the initiation of protein synthesis. Stabilizes the binding of IF-2 and IF-3 on the 30S subunit to which N-formylmethionyl-tRNA(fMet) subsequently binds. Helps modulate mRNA selection, yielding the 30S pre-initiation complex (PIC). Upon addition of the 50S ribosomal subunit IF-1, IF-2 and IF-3 are released leaving the mature 70S translation initiation complex.</text>
</comment>
<comment type="subunit">
    <text evidence="1">Component of the 30S ribosomal translation pre-initiation complex which assembles on the 30S ribosome in the order IF-2 and IF-3, IF-1 and N-formylmethionyl-tRNA(fMet); mRNA recruitment can occur at any time during PIC assembly.</text>
</comment>
<comment type="subcellular location">
    <subcellularLocation>
        <location evidence="1">Cytoplasm</location>
    </subcellularLocation>
</comment>
<comment type="similarity">
    <text evidence="1">Belongs to the IF-1 family.</text>
</comment>
<proteinExistence type="inferred from homology"/>
<organism>
    <name type="scientific">Rhodopseudomonas palustris (strain BisB18)</name>
    <dbReference type="NCBI Taxonomy" id="316056"/>
    <lineage>
        <taxon>Bacteria</taxon>
        <taxon>Pseudomonadati</taxon>
        <taxon>Pseudomonadota</taxon>
        <taxon>Alphaproteobacteria</taxon>
        <taxon>Hyphomicrobiales</taxon>
        <taxon>Nitrobacteraceae</taxon>
        <taxon>Rhodopseudomonas</taxon>
    </lineage>
</organism>
<reference key="1">
    <citation type="submission" date="2006-03" db="EMBL/GenBank/DDBJ databases">
        <title>Complete sequence of Rhodopseudomonas palustris BisB18.</title>
        <authorList>
            <consortium name="US DOE Joint Genome Institute"/>
            <person name="Copeland A."/>
            <person name="Lucas S."/>
            <person name="Lapidus A."/>
            <person name="Barry K."/>
            <person name="Detter J.C."/>
            <person name="Glavina del Rio T."/>
            <person name="Hammon N."/>
            <person name="Israni S."/>
            <person name="Dalin E."/>
            <person name="Tice H."/>
            <person name="Pitluck S."/>
            <person name="Chain P."/>
            <person name="Malfatti S."/>
            <person name="Shin M."/>
            <person name="Vergez L."/>
            <person name="Schmutz J."/>
            <person name="Larimer F."/>
            <person name="Land M."/>
            <person name="Hauser L."/>
            <person name="Pelletier D.A."/>
            <person name="Kyrpides N."/>
            <person name="Anderson I."/>
            <person name="Oda Y."/>
            <person name="Harwood C.S."/>
            <person name="Richardson P."/>
        </authorList>
    </citation>
    <scope>NUCLEOTIDE SEQUENCE [LARGE SCALE GENOMIC DNA]</scope>
    <source>
        <strain>BisB18</strain>
    </source>
</reference>
<dbReference type="EMBL" id="CP000301">
    <property type="protein sequence ID" value="ABD89239.1"/>
    <property type="molecule type" value="Genomic_DNA"/>
</dbReference>
<dbReference type="SMR" id="Q210E7"/>
<dbReference type="STRING" id="316056.RPC_3704"/>
<dbReference type="KEGG" id="rpc:RPC_3704"/>
<dbReference type="eggNOG" id="COG0361">
    <property type="taxonomic scope" value="Bacteria"/>
</dbReference>
<dbReference type="HOGENOM" id="CLU_151267_4_1_5"/>
<dbReference type="OrthoDB" id="9803250at2"/>
<dbReference type="GO" id="GO:0005829">
    <property type="term" value="C:cytosol"/>
    <property type="evidence" value="ECO:0007669"/>
    <property type="project" value="TreeGrafter"/>
</dbReference>
<dbReference type="GO" id="GO:0043022">
    <property type="term" value="F:ribosome binding"/>
    <property type="evidence" value="ECO:0007669"/>
    <property type="project" value="UniProtKB-UniRule"/>
</dbReference>
<dbReference type="GO" id="GO:0019843">
    <property type="term" value="F:rRNA binding"/>
    <property type="evidence" value="ECO:0007669"/>
    <property type="project" value="UniProtKB-UniRule"/>
</dbReference>
<dbReference type="GO" id="GO:0003743">
    <property type="term" value="F:translation initiation factor activity"/>
    <property type="evidence" value="ECO:0007669"/>
    <property type="project" value="UniProtKB-UniRule"/>
</dbReference>
<dbReference type="CDD" id="cd04451">
    <property type="entry name" value="S1_IF1"/>
    <property type="match status" value="1"/>
</dbReference>
<dbReference type="FunFam" id="2.40.50.140:FF:000002">
    <property type="entry name" value="Translation initiation factor IF-1"/>
    <property type="match status" value="1"/>
</dbReference>
<dbReference type="Gene3D" id="2.40.50.140">
    <property type="entry name" value="Nucleic acid-binding proteins"/>
    <property type="match status" value="1"/>
</dbReference>
<dbReference type="HAMAP" id="MF_00075">
    <property type="entry name" value="IF_1"/>
    <property type="match status" value="1"/>
</dbReference>
<dbReference type="InterPro" id="IPR012340">
    <property type="entry name" value="NA-bd_OB-fold"/>
</dbReference>
<dbReference type="InterPro" id="IPR006196">
    <property type="entry name" value="RNA-binding_domain_S1_IF1"/>
</dbReference>
<dbReference type="InterPro" id="IPR004368">
    <property type="entry name" value="TIF_IF1"/>
</dbReference>
<dbReference type="NCBIfam" id="TIGR00008">
    <property type="entry name" value="infA"/>
    <property type="match status" value="1"/>
</dbReference>
<dbReference type="PANTHER" id="PTHR33370">
    <property type="entry name" value="TRANSLATION INITIATION FACTOR IF-1, CHLOROPLASTIC"/>
    <property type="match status" value="1"/>
</dbReference>
<dbReference type="PANTHER" id="PTHR33370:SF1">
    <property type="entry name" value="TRANSLATION INITIATION FACTOR IF-1, CHLOROPLASTIC"/>
    <property type="match status" value="1"/>
</dbReference>
<dbReference type="Pfam" id="PF01176">
    <property type="entry name" value="eIF-1a"/>
    <property type="match status" value="1"/>
</dbReference>
<dbReference type="SUPFAM" id="SSF50249">
    <property type="entry name" value="Nucleic acid-binding proteins"/>
    <property type="match status" value="1"/>
</dbReference>
<dbReference type="PROSITE" id="PS50832">
    <property type="entry name" value="S1_IF1_TYPE"/>
    <property type="match status" value="1"/>
</dbReference>
<sequence>MAKEELIQFEGLVTEILPDARYRVQLDAGHEIVAYTAGKMKKNRIKTLAGDRVTIEMSPYDLEKGRLIFRHKDERPGGGPPRGAPPRGQFRRR</sequence>
<keyword id="KW-0963">Cytoplasm</keyword>
<keyword id="KW-0396">Initiation factor</keyword>
<keyword id="KW-0648">Protein biosynthesis</keyword>
<keyword id="KW-0694">RNA-binding</keyword>
<keyword id="KW-0699">rRNA-binding</keyword>
<gene>
    <name evidence="1" type="primary">infA</name>
    <name type="ordered locus">RPC_3704</name>
</gene>
<feature type="chain" id="PRO_0000263857" description="Translation initiation factor IF-1">
    <location>
        <begin position="1"/>
        <end position="93"/>
    </location>
</feature>
<feature type="domain" description="S1-like" evidence="1">
    <location>
        <begin position="1"/>
        <end position="72"/>
    </location>
</feature>
<feature type="region of interest" description="Disordered" evidence="2">
    <location>
        <begin position="70"/>
        <end position="93"/>
    </location>
</feature>
<protein>
    <recommendedName>
        <fullName evidence="1">Translation initiation factor IF-1</fullName>
    </recommendedName>
</protein>
<evidence type="ECO:0000255" key="1">
    <source>
        <dbReference type="HAMAP-Rule" id="MF_00075"/>
    </source>
</evidence>
<evidence type="ECO:0000256" key="2">
    <source>
        <dbReference type="SAM" id="MobiDB-lite"/>
    </source>
</evidence>
<name>IF1_RHOPB</name>